<name>PTH_ELUMP</name>
<reference key="1">
    <citation type="journal article" date="2009" name="Appl. Environ. Microbiol.">
        <title>Genomic analysis of 'Elusimicrobium minutum,' the first cultivated representative of the phylum 'Elusimicrobia' (formerly termite group 1).</title>
        <authorList>
            <person name="Herlemann D.P.R."/>
            <person name="Geissinger O."/>
            <person name="Ikeda-Ohtsubo W."/>
            <person name="Kunin V."/>
            <person name="Sun H."/>
            <person name="Lapidus A."/>
            <person name="Hugenholtz P."/>
            <person name="Brune A."/>
        </authorList>
    </citation>
    <scope>NUCLEOTIDE SEQUENCE [LARGE SCALE GENOMIC DNA]</scope>
    <source>
        <strain>Pei191</strain>
    </source>
</reference>
<keyword id="KW-0963">Cytoplasm</keyword>
<keyword id="KW-0378">Hydrolase</keyword>
<keyword id="KW-1185">Reference proteome</keyword>
<keyword id="KW-0694">RNA-binding</keyword>
<keyword id="KW-0820">tRNA-binding</keyword>
<evidence type="ECO:0000255" key="1">
    <source>
        <dbReference type="HAMAP-Rule" id="MF_00083"/>
    </source>
</evidence>
<accession>B2KE94</accession>
<sequence>MIKLIVGLGNPGPQYAVTRHNAGFMIVDNLAVKLGVNFNAYKNLGEYVKTTIGGQDVFLAKPLTFMNLSGRMVTHLAGFYKIKPQEILVCFDDISINLGAVRIRKDGSAGGQNGMKNIIELFGTQDIPRLRFGVGPKPERFDSADYVLSKFSKSDEKLLNESIEAAVEAAESCVKDGLERAMNKFNK</sequence>
<comment type="function">
    <text evidence="1">Hydrolyzes ribosome-free peptidyl-tRNAs (with 1 or more amino acids incorporated), which drop off the ribosome during protein synthesis, or as a result of ribosome stalling.</text>
</comment>
<comment type="function">
    <text evidence="1">Catalyzes the release of premature peptidyl moieties from peptidyl-tRNA molecules trapped in stalled 50S ribosomal subunits, and thus maintains levels of free tRNAs and 50S ribosomes.</text>
</comment>
<comment type="catalytic activity">
    <reaction evidence="1">
        <text>an N-acyl-L-alpha-aminoacyl-tRNA + H2O = an N-acyl-L-amino acid + a tRNA + H(+)</text>
        <dbReference type="Rhea" id="RHEA:54448"/>
        <dbReference type="Rhea" id="RHEA-COMP:10123"/>
        <dbReference type="Rhea" id="RHEA-COMP:13883"/>
        <dbReference type="ChEBI" id="CHEBI:15377"/>
        <dbReference type="ChEBI" id="CHEBI:15378"/>
        <dbReference type="ChEBI" id="CHEBI:59874"/>
        <dbReference type="ChEBI" id="CHEBI:78442"/>
        <dbReference type="ChEBI" id="CHEBI:138191"/>
        <dbReference type="EC" id="3.1.1.29"/>
    </reaction>
</comment>
<comment type="subunit">
    <text evidence="1">Monomer.</text>
</comment>
<comment type="subcellular location">
    <subcellularLocation>
        <location evidence="1">Cytoplasm</location>
    </subcellularLocation>
</comment>
<comment type="similarity">
    <text evidence="1">Belongs to the PTH family.</text>
</comment>
<dbReference type="EC" id="3.1.1.29" evidence="1"/>
<dbReference type="EMBL" id="CP001055">
    <property type="protein sequence ID" value="ACC98840.1"/>
    <property type="molecule type" value="Genomic_DNA"/>
</dbReference>
<dbReference type="RefSeq" id="WP_012415455.1">
    <property type="nucleotide sequence ID" value="NC_010644.1"/>
</dbReference>
<dbReference type="SMR" id="B2KE94"/>
<dbReference type="STRING" id="445932.Emin_1290"/>
<dbReference type="KEGG" id="emi:Emin_1290"/>
<dbReference type="HOGENOM" id="CLU_062456_4_1_0"/>
<dbReference type="OrthoDB" id="9800507at2"/>
<dbReference type="Proteomes" id="UP000001029">
    <property type="component" value="Chromosome"/>
</dbReference>
<dbReference type="GO" id="GO:0005737">
    <property type="term" value="C:cytoplasm"/>
    <property type="evidence" value="ECO:0007669"/>
    <property type="project" value="UniProtKB-SubCell"/>
</dbReference>
<dbReference type="GO" id="GO:0004045">
    <property type="term" value="F:peptidyl-tRNA hydrolase activity"/>
    <property type="evidence" value="ECO:0007669"/>
    <property type="project" value="UniProtKB-UniRule"/>
</dbReference>
<dbReference type="GO" id="GO:0000049">
    <property type="term" value="F:tRNA binding"/>
    <property type="evidence" value="ECO:0007669"/>
    <property type="project" value="UniProtKB-UniRule"/>
</dbReference>
<dbReference type="GO" id="GO:0006515">
    <property type="term" value="P:protein quality control for misfolded or incompletely synthesized proteins"/>
    <property type="evidence" value="ECO:0007669"/>
    <property type="project" value="UniProtKB-UniRule"/>
</dbReference>
<dbReference type="GO" id="GO:0072344">
    <property type="term" value="P:rescue of stalled ribosome"/>
    <property type="evidence" value="ECO:0007669"/>
    <property type="project" value="UniProtKB-UniRule"/>
</dbReference>
<dbReference type="CDD" id="cd00462">
    <property type="entry name" value="PTH"/>
    <property type="match status" value="1"/>
</dbReference>
<dbReference type="FunFam" id="3.40.50.1470:FF:000001">
    <property type="entry name" value="Peptidyl-tRNA hydrolase"/>
    <property type="match status" value="1"/>
</dbReference>
<dbReference type="Gene3D" id="3.40.50.1470">
    <property type="entry name" value="Peptidyl-tRNA hydrolase"/>
    <property type="match status" value="1"/>
</dbReference>
<dbReference type="HAMAP" id="MF_00083">
    <property type="entry name" value="Pept_tRNA_hydro_bact"/>
    <property type="match status" value="1"/>
</dbReference>
<dbReference type="InterPro" id="IPR001328">
    <property type="entry name" value="Pept_tRNA_hydro"/>
</dbReference>
<dbReference type="InterPro" id="IPR018171">
    <property type="entry name" value="Pept_tRNA_hydro_CS"/>
</dbReference>
<dbReference type="InterPro" id="IPR036416">
    <property type="entry name" value="Pept_tRNA_hydro_sf"/>
</dbReference>
<dbReference type="NCBIfam" id="TIGR00447">
    <property type="entry name" value="pth"/>
    <property type="match status" value="1"/>
</dbReference>
<dbReference type="PANTHER" id="PTHR17224">
    <property type="entry name" value="PEPTIDYL-TRNA HYDROLASE"/>
    <property type="match status" value="1"/>
</dbReference>
<dbReference type="PANTHER" id="PTHR17224:SF1">
    <property type="entry name" value="PEPTIDYL-TRNA HYDROLASE"/>
    <property type="match status" value="1"/>
</dbReference>
<dbReference type="Pfam" id="PF01195">
    <property type="entry name" value="Pept_tRNA_hydro"/>
    <property type="match status" value="1"/>
</dbReference>
<dbReference type="SUPFAM" id="SSF53178">
    <property type="entry name" value="Peptidyl-tRNA hydrolase-like"/>
    <property type="match status" value="1"/>
</dbReference>
<dbReference type="PROSITE" id="PS01195">
    <property type="entry name" value="PEPT_TRNA_HYDROL_1"/>
    <property type="match status" value="1"/>
</dbReference>
<protein>
    <recommendedName>
        <fullName evidence="1">Peptidyl-tRNA hydrolase</fullName>
        <shortName evidence="1">Pth</shortName>
        <ecNumber evidence="1">3.1.1.29</ecNumber>
    </recommendedName>
</protein>
<organism>
    <name type="scientific">Elusimicrobium minutum (strain Pei191)</name>
    <dbReference type="NCBI Taxonomy" id="445932"/>
    <lineage>
        <taxon>Bacteria</taxon>
        <taxon>Pseudomonadati</taxon>
        <taxon>Elusimicrobiota</taxon>
        <taxon>Elusimicrobia</taxon>
        <taxon>Elusimicrobiales</taxon>
        <taxon>Elusimicrobiaceae</taxon>
        <taxon>Elusimicrobium</taxon>
    </lineage>
</organism>
<proteinExistence type="inferred from homology"/>
<gene>
    <name evidence="1" type="primary">pth</name>
    <name type="ordered locus">Emin_1290</name>
</gene>
<feature type="chain" id="PRO_1000192965" description="Peptidyl-tRNA hydrolase">
    <location>
        <begin position="1"/>
        <end position="187"/>
    </location>
</feature>
<feature type="active site" description="Proton acceptor" evidence="1">
    <location>
        <position position="20"/>
    </location>
</feature>
<feature type="binding site" evidence="1">
    <location>
        <position position="15"/>
    </location>
    <ligand>
        <name>tRNA</name>
        <dbReference type="ChEBI" id="CHEBI:17843"/>
    </ligand>
</feature>
<feature type="binding site" evidence="1">
    <location>
        <position position="65"/>
    </location>
    <ligand>
        <name>tRNA</name>
        <dbReference type="ChEBI" id="CHEBI:17843"/>
    </ligand>
</feature>
<feature type="binding site" evidence="1">
    <location>
        <position position="67"/>
    </location>
    <ligand>
        <name>tRNA</name>
        <dbReference type="ChEBI" id="CHEBI:17843"/>
    </ligand>
</feature>
<feature type="binding site" evidence="1">
    <location>
        <position position="113"/>
    </location>
    <ligand>
        <name>tRNA</name>
        <dbReference type="ChEBI" id="CHEBI:17843"/>
    </ligand>
</feature>
<feature type="site" description="Discriminates between blocked and unblocked aminoacyl-tRNA" evidence="1">
    <location>
        <position position="10"/>
    </location>
</feature>
<feature type="site" description="Stabilizes the basic form of H active site to accept a proton" evidence="1">
    <location>
        <position position="92"/>
    </location>
</feature>